<keyword id="KW-0687">Ribonucleoprotein</keyword>
<keyword id="KW-0689">Ribosomal protein</keyword>
<keyword id="KW-0694">RNA-binding</keyword>
<keyword id="KW-0699">rRNA-binding</keyword>
<evidence type="ECO:0000255" key="1">
    <source>
        <dbReference type="HAMAP-Rule" id="MF_01337"/>
    </source>
</evidence>
<evidence type="ECO:0000305" key="2"/>
<gene>
    <name evidence="1" type="primary">rplR</name>
    <name type="ordered locus">A1I_02115</name>
</gene>
<protein>
    <recommendedName>
        <fullName evidence="1">Large ribosomal subunit protein uL18</fullName>
    </recommendedName>
    <alternativeName>
        <fullName evidence="2">50S ribosomal protein L18</fullName>
    </alternativeName>
</protein>
<sequence length="118" mass="13331">MRSAKLKFEKRRSRIRHKIAKTANRARLSIFKSGRHIYAQIIDDTKSVTIASASTLDEKIKKLKKSHCNVENATKIGELIAEKAVSCGVEEVVFDRSGYKYHGVVKALADAARKKIRF</sequence>
<accession>A8GVD0</accession>
<name>RL18_RICB8</name>
<organism>
    <name type="scientific">Rickettsia bellii (strain OSU 85-389)</name>
    <dbReference type="NCBI Taxonomy" id="391896"/>
    <lineage>
        <taxon>Bacteria</taxon>
        <taxon>Pseudomonadati</taxon>
        <taxon>Pseudomonadota</taxon>
        <taxon>Alphaproteobacteria</taxon>
        <taxon>Rickettsiales</taxon>
        <taxon>Rickettsiaceae</taxon>
        <taxon>Rickettsieae</taxon>
        <taxon>Rickettsia</taxon>
        <taxon>belli group</taxon>
    </lineage>
</organism>
<dbReference type="EMBL" id="CP000849">
    <property type="protein sequence ID" value="ABV78807.1"/>
    <property type="molecule type" value="Genomic_DNA"/>
</dbReference>
<dbReference type="RefSeq" id="WP_011477705.1">
    <property type="nucleotide sequence ID" value="NC_009883.1"/>
</dbReference>
<dbReference type="SMR" id="A8GVD0"/>
<dbReference type="KEGG" id="rbo:A1I_02115"/>
<dbReference type="HOGENOM" id="CLU_098841_0_1_5"/>
<dbReference type="GO" id="GO:0022625">
    <property type="term" value="C:cytosolic large ribosomal subunit"/>
    <property type="evidence" value="ECO:0007669"/>
    <property type="project" value="TreeGrafter"/>
</dbReference>
<dbReference type="GO" id="GO:0008097">
    <property type="term" value="F:5S rRNA binding"/>
    <property type="evidence" value="ECO:0007669"/>
    <property type="project" value="TreeGrafter"/>
</dbReference>
<dbReference type="GO" id="GO:0003735">
    <property type="term" value="F:structural constituent of ribosome"/>
    <property type="evidence" value="ECO:0007669"/>
    <property type="project" value="InterPro"/>
</dbReference>
<dbReference type="GO" id="GO:0006412">
    <property type="term" value="P:translation"/>
    <property type="evidence" value="ECO:0007669"/>
    <property type="project" value="UniProtKB-UniRule"/>
</dbReference>
<dbReference type="CDD" id="cd00432">
    <property type="entry name" value="Ribosomal_L18_L5e"/>
    <property type="match status" value="1"/>
</dbReference>
<dbReference type="FunFam" id="3.30.420.100:FF:000001">
    <property type="entry name" value="50S ribosomal protein L18"/>
    <property type="match status" value="1"/>
</dbReference>
<dbReference type="Gene3D" id="3.30.420.100">
    <property type="match status" value="1"/>
</dbReference>
<dbReference type="HAMAP" id="MF_01337_B">
    <property type="entry name" value="Ribosomal_uL18_B"/>
    <property type="match status" value="1"/>
</dbReference>
<dbReference type="InterPro" id="IPR004389">
    <property type="entry name" value="Ribosomal_uL18_bac-type"/>
</dbReference>
<dbReference type="InterPro" id="IPR005484">
    <property type="entry name" value="Ribosomal_uL18_bac/euk"/>
</dbReference>
<dbReference type="NCBIfam" id="TIGR00060">
    <property type="entry name" value="L18_bact"/>
    <property type="match status" value="1"/>
</dbReference>
<dbReference type="PANTHER" id="PTHR12899">
    <property type="entry name" value="39S RIBOSOMAL PROTEIN L18, MITOCHONDRIAL"/>
    <property type="match status" value="1"/>
</dbReference>
<dbReference type="PANTHER" id="PTHR12899:SF3">
    <property type="entry name" value="LARGE RIBOSOMAL SUBUNIT PROTEIN UL18M"/>
    <property type="match status" value="1"/>
</dbReference>
<dbReference type="Pfam" id="PF00861">
    <property type="entry name" value="Ribosomal_L18p"/>
    <property type="match status" value="1"/>
</dbReference>
<dbReference type="SUPFAM" id="SSF53137">
    <property type="entry name" value="Translational machinery components"/>
    <property type="match status" value="1"/>
</dbReference>
<proteinExistence type="inferred from homology"/>
<feature type="chain" id="PRO_1000053099" description="Large ribosomal subunit protein uL18">
    <location>
        <begin position="1"/>
        <end position="118"/>
    </location>
</feature>
<comment type="function">
    <text evidence="1">This is one of the proteins that bind and probably mediate the attachment of the 5S RNA into the large ribosomal subunit, where it forms part of the central protuberance.</text>
</comment>
<comment type="subunit">
    <text evidence="1">Part of the 50S ribosomal subunit; part of the 5S rRNA/L5/L18/L25 subcomplex. Contacts the 5S and 23S rRNAs.</text>
</comment>
<comment type="similarity">
    <text evidence="1">Belongs to the universal ribosomal protein uL18 family.</text>
</comment>
<reference key="1">
    <citation type="submission" date="2007-09" db="EMBL/GenBank/DDBJ databases">
        <title>Complete genome sequencing of Rickettsia bellii.</title>
        <authorList>
            <person name="Madan A."/>
            <person name="Lee H."/>
            <person name="Madan A."/>
            <person name="Yoon J.-G."/>
            <person name="Ryu G.-Y."/>
            <person name="Dasch G."/>
            <person name="Ereemeva M."/>
        </authorList>
    </citation>
    <scope>NUCLEOTIDE SEQUENCE [LARGE SCALE GENOMIC DNA]</scope>
    <source>
        <strain>OSU 85-389</strain>
    </source>
</reference>